<accession>Q6GEI2</accession>
<comment type="function">
    <text evidence="1">Involved in the binding of tRNA to the ribosomes.</text>
</comment>
<comment type="subunit">
    <text evidence="1">Part of the 30S ribosomal subunit.</text>
</comment>
<comment type="similarity">
    <text evidence="1">Belongs to the universal ribosomal protein uS10 family.</text>
</comment>
<feature type="chain" id="PRO_0000146597" description="Small ribosomal subunit protein uS10">
    <location>
        <begin position="1"/>
        <end position="102"/>
    </location>
</feature>
<protein>
    <recommendedName>
        <fullName evidence="1">Small ribosomal subunit protein uS10</fullName>
    </recommendedName>
    <alternativeName>
        <fullName evidence="2">30S ribosomal protein S10</fullName>
    </alternativeName>
</protein>
<keyword id="KW-0687">Ribonucleoprotein</keyword>
<keyword id="KW-0689">Ribosomal protein</keyword>
<organism>
    <name type="scientific">Staphylococcus aureus (strain MRSA252)</name>
    <dbReference type="NCBI Taxonomy" id="282458"/>
    <lineage>
        <taxon>Bacteria</taxon>
        <taxon>Bacillati</taxon>
        <taxon>Bacillota</taxon>
        <taxon>Bacilli</taxon>
        <taxon>Bacillales</taxon>
        <taxon>Staphylococcaceae</taxon>
        <taxon>Staphylococcus</taxon>
    </lineage>
</organism>
<sequence>MAKQKIRIRLKAYDHRVIDQSAEKIVETAKRSGADVSGPIPLPTEKSVYTIIRAVHKYKDSREQFEQRTHKRLIDIVNPTPKTVDALMGLNLPSGVDIEIKL</sequence>
<dbReference type="EMBL" id="BX571856">
    <property type="protein sequence ID" value="CAG41317.1"/>
    <property type="molecule type" value="Genomic_DNA"/>
</dbReference>
<dbReference type="RefSeq" id="WP_001118667.1">
    <property type="nucleotide sequence ID" value="NC_002952.2"/>
</dbReference>
<dbReference type="SMR" id="Q6GEI2"/>
<dbReference type="GeneID" id="98346563"/>
<dbReference type="KEGG" id="sar:SAR2336"/>
<dbReference type="HOGENOM" id="CLU_122625_1_3_9"/>
<dbReference type="Proteomes" id="UP000000596">
    <property type="component" value="Chromosome"/>
</dbReference>
<dbReference type="GO" id="GO:1990904">
    <property type="term" value="C:ribonucleoprotein complex"/>
    <property type="evidence" value="ECO:0007669"/>
    <property type="project" value="UniProtKB-KW"/>
</dbReference>
<dbReference type="GO" id="GO:0005840">
    <property type="term" value="C:ribosome"/>
    <property type="evidence" value="ECO:0007669"/>
    <property type="project" value="UniProtKB-KW"/>
</dbReference>
<dbReference type="GO" id="GO:0003735">
    <property type="term" value="F:structural constituent of ribosome"/>
    <property type="evidence" value="ECO:0007669"/>
    <property type="project" value="InterPro"/>
</dbReference>
<dbReference type="GO" id="GO:0000049">
    <property type="term" value="F:tRNA binding"/>
    <property type="evidence" value="ECO:0007669"/>
    <property type="project" value="UniProtKB-UniRule"/>
</dbReference>
<dbReference type="GO" id="GO:0006412">
    <property type="term" value="P:translation"/>
    <property type="evidence" value="ECO:0007669"/>
    <property type="project" value="UniProtKB-UniRule"/>
</dbReference>
<dbReference type="FunFam" id="3.30.70.600:FF:000001">
    <property type="entry name" value="30S ribosomal protein S10"/>
    <property type="match status" value="1"/>
</dbReference>
<dbReference type="Gene3D" id="3.30.70.600">
    <property type="entry name" value="Ribosomal protein S10 domain"/>
    <property type="match status" value="1"/>
</dbReference>
<dbReference type="HAMAP" id="MF_00508">
    <property type="entry name" value="Ribosomal_uS10"/>
    <property type="match status" value="1"/>
</dbReference>
<dbReference type="InterPro" id="IPR001848">
    <property type="entry name" value="Ribosomal_uS10"/>
</dbReference>
<dbReference type="InterPro" id="IPR018268">
    <property type="entry name" value="Ribosomal_uS10_CS"/>
</dbReference>
<dbReference type="InterPro" id="IPR027486">
    <property type="entry name" value="Ribosomal_uS10_dom"/>
</dbReference>
<dbReference type="InterPro" id="IPR036838">
    <property type="entry name" value="Ribosomal_uS10_dom_sf"/>
</dbReference>
<dbReference type="NCBIfam" id="NF001861">
    <property type="entry name" value="PRK00596.1"/>
    <property type="match status" value="1"/>
</dbReference>
<dbReference type="NCBIfam" id="TIGR01049">
    <property type="entry name" value="rpsJ_bact"/>
    <property type="match status" value="1"/>
</dbReference>
<dbReference type="PANTHER" id="PTHR11700">
    <property type="entry name" value="30S RIBOSOMAL PROTEIN S10 FAMILY MEMBER"/>
    <property type="match status" value="1"/>
</dbReference>
<dbReference type="Pfam" id="PF00338">
    <property type="entry name" value="Ribosomal_S10"/>
    <property type="match status" value="1"/>
</dbReference>
<dbReference type="PRINTS" id="PR00971">
    <property type="entry name" value="RIBOSOMALS10"/>
</dbReference>
<dbReference type="SMART" id="SM01403">
    <property type="entry name" value="Ribosomal_S10"/>
    <property type="match status" value="1"/>
</dbReference>
<dbReference type="SUPFAM" id="SSF54999">
    <property type="entry name" value="Ribosomal protein S10"/>
    <property type="match status" value="1"/>
</dbReference>
<dbReference type="PROSITE" id="PS00361">
    <property type="entry name" value="RIBOSOMAL_S10"/>
    <property type="match status" value="1"/>
</dbReference>
<evidence type="ECO:0000255" key="1">
    <source>
        <dbReference type="HAMAP-Rule" id="MF_00508"/>
    </source>
</evidence>
<evidence type="ECO:0000305" key="2"/>
<name>RS10_STAAR</name>
<gene>
    <name evidence="1" type="primary">rpsJ</name>
    <name type="ordered locus">SAR2336</name>
</gene>
<reference key="1">
    <citation type="journal article" date="2004" name="Proc. Natl. Acad. Sci. U.S.A.">
        <title>Complete genomes of two clinical Staphylococcus aureus strains: evidence for the rapid evolution of virulence and drug resistance.</title>
        <authorList>
            <person name="Holden M.T.G."/>
            <person name="Feil E.J."/>
            <person name="Lindsay J.A."/>
            <person name="Peacock S.J."/>
            <person name="Day N.P.J."/>
            <person name="Enright M.C."/>
            <person name="Foster T.J."/>
            <person name="Moore C.E."/>
            <person name="Hurst L."/>
            <person name="Atkin R."/>
            <person name="Barron A."/>
            <person name="Bason N."/>
            <person name="Bentley S.D."/>
            <person name="Chillingworth C."/>
            <person name="Chillingworth T."/>
            <person name="Churcher C."/>
            <person name="Clark L."/>
            <person name="Corton C."/>
            <person name="Cronin A."/>
            <person name="Doggett J."/>
            <person name="Dowd L."/>
            <person name="Feltwell T."/>
            <person name="Hance Z."/>
            <person name="Harris B."/>
            <person name="Hauser H."/>
            <person name="Holroyd S."/>
            <person name="Jagels K."/>
            <person name="James K.D."/>
            <person name="Lennard N."/>
            <person name="Line A."/>
            <person name="Mayes R."/>
            <person name="Moule S."/>
            <person name="Mungall K."/>
            <person name="Ormond D."/>
            <person name="Quail M.A."/>
            <person name="Rabbinowitsch E."/>
            <person name="Rutherford K.M."/>
            <person name="Sanders M."/>
            <person name="Sharp S."/>
            <person name="Simmonds M."/>
            <person name="Stevens K."/>
            <person name="Whitehead S."/>
            <person name="Barrell B.G."/>
            <person name="Spratt B.G."/>
            <person name="Parkhill J."/>
        </authorList>
    </citation>
    <scope>NUCLEOTIDE SEQUENCE [LARGE SCALE GENOMIC DNA]</scope>
    <source>
        <strain>MRSA252</strain>
    </source>
</reference>
<proteinExistence type="inferred from homology"/>